<sequence length="189" mass="19934">MAATTTMATLNLPSLTSHPNSSTFPKHPQPLQFPFRTTTNPISLSSTRTTRLRPIAAVEAPEKIEQLGTQLSGLTLEEARVLVDWLQDKLGVSAASFAPAAAVAAPGAPADAAPAVEEKTEFDVSIDEVPSNARISVIKAVRALTSLGLKEAKELIEGLPKKLKEGVSKDDAEDAKKQLEDAGAKVSIV</sequence>
<reference key="1">
    <citation type="journal article" date="1989" name="Biochemistry">
        <title>Chloroplast ribosomal protein L12 is encoded in the nucleus: construction and identification of its cDNA clones and nucleotide sequence including the transit peptide.</title>
        <authorList>
            <person name="Giese K."/>
            <person name="Subramanian A.R."/>
        </authorList>
    </citation>
    <scope>NUCLEOTIDE SEQUENCE [MRNA]</scope>
</reference>
<reference key="2">
    <citation type="submission" date="1988-10" db="EMBL/GenBank/DDBJ databases">
        <title>Analysis of two full length cDNAs coding for chloroplast precursor ribosomal proteins homologous to the E. coli L12 and L24 ribosomal proteins respectively.</title>
        <authorList>
            <person name="Li Y."/>
            <person name="Zhou D.X."/>
            <person name="Seyer P."/>
            <person name="Massenet O."/>
            <person name="Dorne A.M."/>
            <person name="Mache R."/>
        </authorList>
    </citation>
    <scope>NUCLEOTIDE SEQUENCE [MRNA]</scope>
    <source>
        <tissue>Leaf</tissue>
    </source>
</reference>
<reference key="3">
    <citation type="journal article" date="2014" name="Nature">
        <title>The genome of the recently domesticated crop plant sugar beet (Beta vulgaris).</title>
        <authorList>
            <person name="Dohm J.C."/>
            <person name="Minoche A.E."/>
            <person name="Holtgraewe D."/>
            <person name="Capella-Gutierrez S."/>
            <person name="Zakrzewski F."/>
            <person name="Tafer H."/>
            <person name="Rupp O."/>
            <person name="Soerensen T.R."/>
            <person name="Stracke R."/>
            <person name="Reinhardt R."/>
            <person name="Goesmann A."/>
            <person name="Kraft T."/>
            <person name="Schulz B."/>
            <person name="Stadler P.F."/>
            <person name="Schmidt T."/>
            <person name="Gabaldon T."/>
            <person name="Lehrach H."/>
            <person name="Weisshaar B."/>
            <person name="Himmelbauer H."/>
        </authorList>
    </citation>
    <scope>NUCLEOTIDE SEQUENCE [LARGE SCALE GENOMIC DNA]</scope>
    <source>
        <strain>cv. Viroflay</strain>
        <tissue>Leaf</tissue>
    </source>
</reference>
<reference key="4">
    <citation type="journal article" date="1982" name="Proc. Natl. Acad. Sci. U.S.A.">
        <title>Purification, primary structure, and homology relationships of a chloroplast ribosomal protein.</title>
        <authorList>
            <person name="Bartsch M."/>
            <person name="Kimura M."/>
            <person name="Subramanian A.R."/>
        </authorList>
    </citation>
    <scope>PROTEIN SEQUENCE OF 57-189</scope>
    <source>
        <strain>cv. Alwaro</strain>
        <tissue>Leaf</tissue>
    </source>
</reference>
<reference key="5">
    <citation type="submission" date="1999-11" db="UniProtKB">
        <authorList>
            <person name="Bartsch M."/>
            <person name="Kimura M."/>
            <person name="Subramanian A.R."/>
        </authorList>
    </citation>
    <scope>SEQUENCE REVISION TO 113-115</scope>
</reference>
<reference key="6">
    <citation type="journal article" date="2000" name="J. Biol. Chem.">
        <title>The plastid ribosomal proteins. Identification of all the proteins in the 50S subunit of an organelle ribosome (chloroplast).</title>
        <authorList>
            <person name="Yamaguchi K."/>
            <person name="Subramanian A.R."/>
        </authorList>
    </citation>
    <scope>PROTEIN SEQUENCE OF 57-62</scope>
    <scope>SUBUNIT</scope>
    <scope>SUBCELLULAR LOCATION</scope>
    <scope>MASS SPECTROMETRY</scope>
    <source>
        <strain>cv. Alwaro</strain>
        <tissue>Leaf</tissue>
    </source>
</reference>
<reference key="7">
    <citation type="journal article" date="2007" name="Proc. Natl. Acad. Sci. U.S.A.">
        <title>Cryo-EM study of the spinach chloroplast ribosome reveals the structural and functional roles of plastid-specific ribosomal proteins.</title>
        <authorList>
            <person name="Sharma M.R."/>
            <person name="Wilson D.N."/>
            <person name="Datta P.P."/>
            <person name="Barat C."/>
            <person name="Schluenzen F."/>
            <person name="Fucini P."/>
            <person name="Agrawal R.K."/>
        </authorList>
    </citation>
    <scope>MODELING ON THE 70S RIBOSOME</scope>
</reference>
<reference key="8">
    <citation type="journal article" date="2017" name="EMBO J.">
        <title>The complete structure of the chloroplast 70S ribosome in complex with translation factor pY.</title>
        <authorList>
            <person name="Bieri P."/>
            <person name="Leibundgut M."/>
            <person name="Saurer M."/>
            <person name="Boehringer D."/>
            <person name="Ban N."/>
        </authorList>
    </citation>
    <scope>NOMENCLATURE</scope>
    <scope>SUBUNIT</scope>
    <scope>SUBCELLULAR LOCATION</scope>
</reference>
<proteinExistence type="evidence at protein level"/>
<dbReference type="EMBL" id="J02849">
    <property type="protein sequence ID" value="AAA34031.1"/>
    <property type="molecule type" value="mRNA"/>
</dbReference>
<dbReference type="EMBL" id="X13153">
    <property type="protein sequence ID" value="CAA31551.1"/>
    <property type="molecule type" value="mRNA"/>
</dbReference>
<dbReference type="EMBL" id="KQ136668">
    <property type="protein sequence ID" value="KNA21798.1"/>
    <property type="molecule type" value="Genomic_DNA"/>
</dbReference>
<dbReference type="PIR" id="A30115">
    <property type="entry name" value="R7SP12"/>
</dbReference>
<dbReference type="SMR" id="P02398"/>
<dbReference type="STRING" id="3562.P02398"/>
<dbReference type="OrthoDB" id="250175at2759"/>
<dbReference type="Proteomes" id="UP001155700">
    <property type="component" value="Unplaced"/>
</dbReference>
<dbReference type="GO" id="GO:0009507">
    <property type="term" value="C:chloroplast"/>
    <property type="evidence" value="ECO:0007669"/>
    <property type="project" value="UniProtKB-SubCell"/>
</dbReference>
<dbReference type="GO" id="GO:1990904">
    <property type="term" value="C:ribonucleoprotein complex"/>
    <property type="evidence" value="ECO:0007669"/>
    <property type="project" value="UniProtKB-KW"/>
</dbReference>
<dbReference type="GO" id="GO:0005840">
    <property type="term" value="C:ribosome"/>
    <property type="evidence" value="ECO:0007669"/>
    <property type="project" value="UniProtKB-KW"/>
</dbReference>
<dbReference type="GO" id="GO:0003729">
    <property type="term" value="F:mRNA binding"/>
    <property type="evidence" value="ECO:0000318"/>
    <property type="project" value="GO_Central"/>
</dbReference>
<dbReference type="GO" id="GO:0003735">
    <property type="term" value="F:structural constituent of ribosome"/>
    <property type="evidence" value="ECO:0000318"/>
    <property type="project" value="GO_Central"/>
</dbReference>
<dbReference type="GO" id="GO:0006412">
    <property type="term" value="P:translation"/>
    <property type="evidence" value="ECO:0000318"/>
    <property type="project" value="GO_Central"/>
</dbReference>
<dbReference type="CDD" id="cd00387">
    <property type="entry name" value="Ribosomal_L7_L12"/>
    <property type="match status" value="1"/>
</dbReference>
<dbReference type="FunFam" id="3.30.1390.10:FF:000001">
    <property type="entry name" value="50S ribosomal protein L7/L12"/>
    <property type="match status" value="1"/>
</dbReference>
<dbReference type="Gene3D" id="3.30.1390.10">
    <property type="match status" value="1"/>
</dbReference>
<dbReference type="Gene3D" id="1.20.5.710">
    <property type="entry name" value="Single helix bin"/>
    <property type="match status" value="1"/>
</dbReference>
<dbReference type="HAMAP" id="MF_00368">
    <property type="entry name" value="Ribosomal_bL12"/>
    <property type="match status" value="1"/>
</dbReference>
<dbReference type="InterPro" id="IPR000206">
    <property type="entry name" value="Ribosomal_bL12"/>
</dbReference>
<dbReference type="InterPro" id="IPR013823">
    <property type="entry name" value="Ribosomal_bL12_C"/>
</dbReference>
<dbReference type="InterPro" id="IPR014719">
    <property type="entry name" value="Ribosomal_bL12_C/ClpS-like"/>
</dbReference>
<dbReference type="InterPro" id="IPR008932">
    <property type="entry name" value="Ribosomal_bL12_oligo"/>
</dbReference>
<dbReference type="InterPro" id="IPR036235">
    <property type="entry name" value="Ribosomal_bL12_oligo_N_sf"/>
</dbReference>
<dbReference type="NCBIfam" id="TIGR00855">
    <property type="entry name" value="L12"/>
    <property type="match status" value="1"/>
</dbReference>
<dbReference type="PANTHER" id="PTHR45987">
    <property type="entry name" value="39S RIBOSOMAL PROTEIN L12"/>
    <property type="match status" value="1"/>
</dbReference>
<dbReference type="PANTHER" id="PTHR45987:SF26">
    <property type="entry name" value="LARGE RIBOSOMAL SUBUNIT PROTEIN BL12CX-RELATED"/>
    <property type="match status" value="1"/>
</dbReference>
<dbReference type="Pfam" id="PF00542">
    <property type="entry name" value="Ribosomal_L12"/>
    <property type="match status" value="1"/>
</dbReference>
<dbReference type="Pfam" id="PF16320">
    <property type="entry name" value="Ribosomal_L12_N"/>
    <property type="match status" value="1"/>
</dbReference>
<dbReference type="SUPFAM" id="SSF54736">
    <property type="entry name" value="ClpS-like"/>
    <property type="match status" value="1"/>
</dbReference>
<dbReference type="SUPFAM" id="SSF48300">
    <property type="entry name" value="Ribosomal protein L7/12, oligomerisation (N-terminal) domain"/>
    <property type="match status" value="1"/>
</dbReference>
<accession>P02398</accession>
<accession>Q53WU1</accession>
<comment type="function">
    <text evidence="8 9">Component of the chloroplast ribosome (chloro-ribosome), a dedicated translation machinery responsible for the synthesis of chloroplast genome-encoded proteins, including proteins of the transcription and translation machinery and components of the photosynthetic apparatus.</text>
</comment>
<comment type="subunit">
    <text evidence="2 4">Component of the chloroplast large ribosomal subunit (LSU). Mature 70S chloroplast ribosomes of higher plants consist of a small (30S) and a large (50S) subunit. The 30S small subunit contains 1 molecule of ribosomal RNA (16S rRNA) and 24 different proteins. The 50S large subunit contains 3 rRNA molecules (23S, 5S and 4.5S rRNA) and 33 different proteins.</text>
</comment>
<comment type="subcellular location">
    <subcellularLocation>
        <location evidence="2 4">Plastid</location>
        <location evidence="2 4">Chloroplast</location>
    </subcellularLocation>
</comment>
<comment type="mass spectrometry" mass="13813.0" method="Electrospray" evidence="2"/>
<comment type="similarity">
    <text evidence="7">Belongs to the bacterial ribosomal protein bL12 family.</text>
</comment>
<organism>
    <name type="scientific">Spinacia oleracea</name>
    <name type="common">Spinach</name>
    <dbReference type="NCBI Taxonomy" id="3562"/>
    <lineage>
        <taxon>Eukaryota</taxon>
        <taxon>Viridiplantae</taxon>
        <taxon>Streptophyta</taxon>
        <taxon>Embryophyta</taxon>
        <taxon>Tracheophyta</taxon>
        <taxon>Spermatophyta</taxon>
        <taxon>Magnoliopsida</taxon>
        <taxon>eudicotyledons</taxon>
        <taxon>Gunneridae</taxon>
        <taxon>Pentapetalae</taxon>
        <taxon>Caryophyllales</taxon>
        <taxon>Chenopodiaceae</taxon>
        <taxon>Chenopodioideae</taxon>
        <taxon>Anserineae</taxon>
        <taxon>Spinacia</taxon>
    </lineage>
</organism>
<keyword id="KW-0150">Chloroplast</keyword>
<keyword id="KW-0903">Direct protein sequencing</keyword>
<keyword id="KW-0934">Plastid</keyword>
<keyword id="KW-1185">Reference proteome</keyword>
<keyword id="KW-0687">Ribonucleoprotein</keyword>
<keyword id="KW-0689">Ribosomal protein</keyword>
<keyword id="KW-0694">RNA-binding</keyword>
<keyword id="KW-0809">Transit peptide</keyword>
<gene>
    <name type="primary">RPL12</name>
    <name type="ORF">SOVF_040080</name>
</gene>
<feature type="transit peptide" description="Chloroplast" evidence="2 3">
    <location>
        <begin position="1"/>
        <end position="56"/>
    </location>
</feature>
<feature type="chain" id="PRO_0000030454" description="Large ribosomal subunit protein bL12c">
    <location>
        <begin position="57"/>
        <end position="189"/>
    </location>
</feature>
<feature type="region of interest" description="Disordered" evidence="1">
    <location>
        <begin position="1"/>
        <end position="30"/>
    </location>
</feature>
<feature type="region of interest" description="Disordered" evidence="1">
    <location>
        <begin position="165"/>
        <end position="189"/>
    </location>
</feature>
<feature type="compositionally biased region" description="Polar residues" evidence="1">
    <location>
        <begin position="11"/>
        <end position="24"/>
    </location>
</feature>
<feature type="compositionally biased region" description="Basic and acidic residues" evidence="1">
    <location>
        <begin position="165"/>
        <end position="183"/>
    </location>
</feature>
<name>RK12_SPIOL</name>
<evidence type="ECO:0000256" key="1">
    <source>
        <dbReference type="SAM" id="MobiDB-lite"/>
    </source>
</evidence>
<evidence type="ECO:0000269" key="2">
    <source>
    </source>
</evidence>
<evidence type="ECO:0000269" key="3">
    <source>
    </source>
</evidence>
<evidence type="ECO:0000269" key="4">
    <source>
    </source>
</evidence>
<evidence type="ECO:0000303" key="5">
    <source>
    </source>
</evidence>
<evidence type="ECO:0000303" key="6">
    <source>
    </source>
</evidence>
<evidence type="ECO:0000305" key="7"/>
<evidence type="ECO:0000305" key="8">
    <source>
    </source>
</evidence>
<evidence type="ECO:0000305" key="9">
    <source>
    </source>
</evidence>
<protein>
    <recommendedName>
        <fullName evidence="6">Large ribosomal subunit protein bL12c</fullName>
    </recommendedName>
    <alternativeName>
        <fullName evidence="5">50S ribosomal protein L12, chloroplastic</fullName>
    </alternativeName>
    <alternativeName>
        <fullName>CL12</fullName>
    </alternativeName>
</protein>